<gene>
    <name evidence="1" type="primary">arnF</name>
    <name type="ordered locus">PLES_14751</name>
</gene>
<organism>
    <name type="scientific">Pseudomonas aeruginosa (strain LESB58)</name>
    <dbReference type="NCBI Taxonomy" id="557722"/>
    <lineage>
        <taxon>Bacteria</taxon>
        <taxon>Pseudomonadati</taxon>
        <taxon>Pseudomonadota</taxon>
        <taxon>Gammaproteobacteria</taxon>
        <taxon>Pseudomonadales</taxon>
        <taxon>Pseudomonadaceae</taxon>
        <taxon>Pseudomonas</taxon>
    </lineage>
</organism>
<name>ARNF_PSEA8</name>
<proteinExistence type="inferred from homology"/>
<dbReference type="EMBL" id="FM209186">
    <property type="protein sequence ID" value="CAW26203.1"/>
    <property type="molecule type" value="Genomic_DNA"/>
</dbReference>
<dbReference type="RefSeq" id="WP_012613745.1">
    <property type="nucleotide sequence ID" value="NC_011770.1"/>
</dbReference>
<dbReference type="KEGG" id="pag:PLES_14751"/>
<dbReference type="HOGENOM" id="CLU_131462_1_0_6"/>
<dbReference type="UniPathway" id="UPA00030"/>
<dbReference type="GO" id="GO:0005886">
    <property type="term" value="C:plasma membrane"/>
    <property type="evidence" value="ECO:0007669"/>
    <property type="project" value="UniProtKB-SubCell"/>
</dbReference>
<dbReference type="GO" id="GO:1901505">
    <property type="term" value="F:carbohydrate derivative transmembrane transporter activity"/>
    <property type="evidence" value="ECO:0007669"/>
    <property type="project" value="InterPro"/>
</dbReference>
<dbReference type="GO" id="GO:0009245">
    <property type="term" value="P:lipid A biosynthetic process"/>
    <property type="evidence" value="ECO:0007669"/>
    <property type="project" value="UniProtKB-UniRule"/>
</dbReference>
<dbReference type="GO" id="GO:0009103">
    <property type="term" value="P:lipopolysaccharide biosynthetic process"/>
    <property type="evidence" value="ECO:0007669"/>
    <property type="project" value="UniProtKB-UniRule"/>
</dbReference>
<dbReference type="FunFam" id="1.10.3730.20:FF:000028">
    <property type="entry name" value="Probable 4-amino-4-deoxy-L-arabinose-phosphoundecaprenol flippase subunit ArnF"/>
    <property type="match status" value="1"/>
</dbReference>
<dbReference type="Gene3D" id="1.10.3730.20">
    <property type="match status" value="1"/>
</dbReference>
<dbReference type="HAMAP" id="MF_00538">
    <property type="entry name" value="Flippase_ArnF"/>
    <property type="match status" value="1"/>
</dbReference>
<dbReference type="InterPro" id="IPR022832">
    <property type="entry name" value="Flippase_ArnF"/>
</dbReference>
<dbReference type="InterPro" id="IPR000390">
    <property type="entry name" value="Small_drug/metabolite_transptr"/>
</dbReference>
<dbReference type="NCBIfam" id="NF002816">
    <property type="entry name" value="PRK02971.1-2"/>
    <property type="match status" value="1"/>
</dbReference>
<dbReference type="PANTHER" id="PTHR30561:SF9">
    <property type="entry name" value="4-AMINO-4-DEOXY-L-ARABINOSE-PHOSPHOUNDECAPRENOL FLIPPASE SUBUNIT ARNF-RELATED"/>
    <property type="match status" value="1"/>
</dbReference>
<dbReference type="PANTHER" id="PTHR30561">
    <property type="entry name" value="SMR FAMILY PROTON-DEPENDENT DRUG EFFLUX TRANSPORTER SUGE"/>
    <property type="match status" value="1"/>
</dbReference>
<dbReference type="SUPFAM" id="SSF103481">
    <property type="entry name" value="Multidrug resistance efflux transporter EmrE"/>
    <property type="match status" value="1"/>
</dbReference>
<keyword id="KW-0997">Cell inner membrane</keyword>
<keyword id="KW-1003">Cell membrane</keyword>
<keyword id="KW-0441">Lipid A biosynthesis</keyword>
<keyword id="KW-0444">Lipid biosynthesis</keyword>
<keyword id="KW-0443">Lipid metabolism</keyword>
<keyword id="KW-0448">Lipopolysaccharide biosynthesis</keyword>
<keyword id="KW-0472">Membrane</keyword>
<keyword id="KW-0812">Transmembrane</keyword>
<keyword id="KW-1133">Transmembrane helix</keyword>
<keyword id="KW-0813">Transport</keyword>
<sequence length="137" mass="14317">MNALRGWLAALGSMLLASAAQLGMRWGMSRLPLPEAWAGQTPERAALLAVALAVAAYAASLLCWLAALRHLPLGRAYSLLSASYALVYLLAASLPAFDETFSTSKILGVGLVVLGVLTVNARRTAAAPAHHPSRKAP</sequence>
<reference key="1">
    <citation type="journal article" date="2009" name="Genome Res.">
        <title>Newly introduced genomic prophage islands are critical determinants of in vivo competitiveness in the Liverpool epidemic strain of Pseudomonas aeruginosa.</title>
        <authorList>
            <person name="Winstanley C."/>
            <person name="Langille M.G.I."/>
            <person name="Fothergill J.L."/>
            <person name="Kukavica-Ibrulj I."/>
            <person name="Paradis-Bleau C."/>
            <person name="Sanschagrin F."/>
            <person name="Thomson N.R."/>
            <person name="Winsor G.L."/>
            <person name="Quail M.A."/>
            <person name="Lennard N."/>
            <person name="Bignell A."/>
            <person name="Clarke L."/>
            <person name="Seeger K."/>
            <person name="Saunders D."/>
            <person name="Harris D."/>
            <person name="Parkhill J."/>
            <person name="Hancock R.E.W."/>
            <person name="Brinkman F.S.L."/>
            <person name="Levesque R.C."/>
        </authorList>
    </citation>
    <scope>NUCLEOTIDE SEQUENCE [LARGE SCALE GENOMIC DNA]</scope>
    <source>
        <strain>LESB58</strain>
    </source>
</reference>
<protein>
    <recommendedName>
        <fullName evidence="1">Probable 4-amino-4-deoxy-L-arabinose-phosphoundecaprenol flippase subunit ArnF</fullName>
        <shortName evidence="1">L-Ara4N-phosphoundecaprenol flippase subunit ArnF</shortName>
    </recommendedName>
    <alternativeName>
        <fullName evidence="1">Undecaprenyl phosphate-aminoarabinose flippase subunit ArnF</fullName>
    </alternativeName>
</protein>
<feature type="chain" id="PRO_0000382009" description="Probable 4-amino-4-deoxy-L-arabinose-phosphoundecaprenol flippase subunit ArnF">
    <location>
        <begin position="1"/>
        <end position="137"/>
    </location>
</feature>
<feature type="topological domain" description="Cytoplasmic" evidence="1">
    <location>
        <begin position="1"/>
        <end position="3"/>
    </location>
</feature>
<feature type="transmembrane region" description="Helical" evidence="1">
    <location>
        <begin position="4"/>
        <end position="24"/>
    </location>
</feature>
<feature type="topological domain" description="Periplasmic" evidence="1">
    <location>
        <begin position="25"/>
        <end position="44"/>
    </location>
</feature>
<feature type="transmembrane region" description="Helical" evidence="1">
    <location>
        <begin position="45"/>
        <end position="65"/>
    </location>
</feature>
<feature type="topological domain" description="Cytoplasmic" evidence="1">
    <location>
        <begin position="66"/>
        <end position="76"/>
    </location>
</feature>
<feature type="transmembrane region" description="Helical" evidence="1">
    <location>
        <begin position="77"/>
        <end position="97"/>
    </location>
</feature>
<feature type="topological domain" description="Periplasmic" evidence="1">
    <location>
        <begin position="98"/>
        <end position="100"/>
    </location>
</feature>
<feature type="transmembrane region" description="Helical" evidence="1">
    <location>
        <begin position="101"/>
        <end position="121"/>
    </location>
</feature>
<feature type="topological domain" description="Cytoplasmic" evidence="1">
    <location>
        <begin position="122"/>
        <end position="137"/>
    </location>
</feature>
<evidence type="ECO:0000255" key="1">
    <source>
        <dbReference type="HAMAP-Rule" id="MF_00538"/>
    </source>
</evidence>
<comment type="function">
    <text evidence="1">Translocates 4-amino-4-deoxy-L-arabinose-phosphoundecaprenol (alpha-L-Ara4N-phosphoundecaprenol) from the cytoplasmic to the periplasmic side of the inner membrane.</text>
</comment>
<comment type="pathway">
    <text evidence="1">Bacterial outer membrane biogenesis; lipopolysaccharide biosynthesis.</text>
</comment>
<comment type="subunit">
    <text evidence="1">Heterodimer of ArnE and ArnF.</text>
</comment>
<comment type="subcellular location">
    <subcellularLocation>
        <location evidence="1">Cell inner membrane</location>
        <topology evidence="1">Multi-pass membrane protein</topology>
    </subcellularLocation>
</comment>
<comment type="similarity">
    <text evidence="1">Belongs to the ArnF family.</text>
</comment>
<accession>B7VBM8</accession>